<keyword id="KW-0175">Coiled coil</keyword>
<keyword id="KW-0903">Direct protein sequencing</keyword>
<keyword id="KW-1185">Reference proteome</keyword>
<keyword id="KW-1171">Viral genome ejection through host cell envelope</keyword>
<keyword id="KW-1243">Viral long flexible tail ejection system</keyword>
<keyword id="KW-1162">Viral penetration into host cytoplasm</keyword>
<keyword id="KW-1188">Viral release from host cell</keyword>
<keyword id="KW-1245">Viral tail assembly</keyword>
<keyword id="KW-1227">Viral tail protein</keyword>
<keyword id="KW-0946">Virion</keyword>
<keyword id="KW-1160">Virus entry into host cell</keyword>
<gene>
    <name evidence="5" type="ORF">18</name>
</gene>
<accession>P85501</accession>
<accession>B5WZT4</accession>
<reference key="1">
    <citation type="journal article" date="2009" name="Virus Res.">
        <title>Characteristics of a novel Pseudomonas aeruginosa bacteriophage, PAJU2, which is genetically related to bacteriophage D3.</title>
        <authorList>
            <person name="Uchiyama J."/>
            <person name="Rashel M."/>
            <person name="Matsumoto T."/>
            <person name="Sumiyama Y."/>
            <person name="Wakiguchi H."/>
            <person name="Matsuzaki S."/>
        </authorList>
    </citation>
    <scope>NUCLEOTIDE SEQUENCE [GENOMIC DNA]</scope>
    <scope>PROTEIN SEQUENCE OF 2-21</scope>
    <scope>SUBCELLULAR LOCATION</scope>
</reference>
<feature type="initiator methionine" description="Removed" evidence="3">
    <location>
        <position position="1"/>
    </location>
</feature>
<feature type="chain" id="PRO_0000326457" description="Tape measure protein" evidence="3">
    <location>
        <begin position="2"/>
        <end position="917"/>
    </location>
</feature>
<feature type="region of interest" description="Disordered" evidence="2">
    <location>
        <begin position="852"/>
        <end position="877"/>
    </location>
</feature>
<feature type="coiled-coil region" evidence="1">
    <location>
        <begin position="501"/>
        <end position="528"/>
    </location>
</feature>
<feature type="coiled-coil region" evidence="1">
    <location>
        <begin position="575"/>
        <end position="602"/>
    </location>
</feature>
<comment type="function">
    <text evidence="1">Serves as a ruler that controls the length of tail by stopping the tail tube polymerization and is probably released from the tail shaft during infection to facilitate DNA translocation into the host cell. Assembles into a multimeric linear form probably arranged as a coil of alpha-helices and stabilized by the covering tail assembly proteins. Its C-terminus fixes the tail tip complex, thereby forming the tail assembly initiator complex. Tail tube proteins polymerize around the tape measure protein, displacing the tail assembly proteins. When the tail reaches the length specified by the tape measure protein, it stops and becomes capped by the tail terminator protein.</text>
</comment>
<comment type="subunit">
    <text evidence="1">Interacts with the tail initiator complex presumably through its C-terminus domain. Interacts with the tail assembly proteins.</text>
</comment>
<comment type="subcellular location">
    <subcellularLocation>
        <location evidence="1 3">Virion</location>
    </subcellularLocation>
</comment>
<comment type="similarity">
    <text evidence="1">Belongs to the Lambdavirus tape measure protein family.</text>
</comment>
<organism>
    <name type="scientific">Pseudomonas phage PAJU2</name>
    <dbReference type="NCBI Taxonomy" id="504346"/>
    <lineage>
        <taxon>Viruses</taxon>
        <taxon>Duplodnaviria</taxon>
        <taxon>Heunggongvirae</taxon>
        <taxon>Uroviricota</taxon>
        <taxon>Caudoviricetes</taxon>
        <taxon>Detrevirus</taxon>
    </lineage>
</organism>
<dbReference type="EMBL" id="AP009624">
    <property type="protein sequence ID" value="BAG75002.1"/>
    <property type="molecule type" value="Genomic_DNA"/>
</dbReference>
<dbReference type="RefSeq" id="YP_002284352.1">
    <property type="nucleotide sequence ID" value="NC_011373.1"/>
</dbReference>
<dbReference type="SMR" id="P85501"/>
<dbReference type="KEGG" id="vg:6989657"/>
<dbReference type="OrthoDB" id="127at10239"/>
<dbReference type="Proteomes" id="UP000001041">
    <property type="component" value="Genome"/>
</dbReference>
<dbReference type="GO" id="GO:0098015">
    <property type="term" value="C:virus tail"/>
    <property type="evidence" value="ECO:0007669"/>
    <property type="project" value="UniProtKB-UniRule"/>
</dbReference>
<dbReference type="GO" id="GO:0099001">
    <property type="term" value="P:symbiont genome ejection through host cell envelope, long flexible tail mechanism"/>
    <property type="evidence" value="ECO:0007669"/>
    <property type="project" value="UniProtKB-KW"/>
</dbReference>
<dbReference type="GO" id="GO:0098003">
    <property type="term" value="P:viral tail assembly"/>
    <property type="evidence" value="ECO:0007669"/>
    <property type="project" value="UniProtKB-UniRule"/>
</dbReference>
<dbReference type="HAMAP" id="MF_04138">
    <property type="entry name" value="TMP_LAMBDA"/>
    <property type="match status" value="1"/>
</dbReference>
<dbReference type="InterPro" id="IPR043680">
    <property type="entry name" value="GpH_LAMBDA"/>
</dbReference>
<dbReference type="InterPro" id="IPR009628">
    <property type="entry name" value="Phage_tape_measure_N"/>
</dbReference>
<dbReference type="Pfam" id="PF06791">
    <property type="entry name" value="TMP_2"/>
    <property type="match status" value="1"/>
</dbReference>
<dbReference type="Pfam" id="PF24622">
    <property type="entry name" value="TMP_4"/>
    <property type="match status" value="1"/>
</dbReference>
<protein>
    <recommendedName>
        <fullName evidence="1">Tape measure protein</fullName>
        <shortName evidence="1">TMP</shortName>
    </recommendedName>
    <alternativeName>
        <fullName evidence="4">ORF10 protein</fullName>
    </alternativeName>
    <alternativeName>
        <fullName evidence="4">Structural protein 1</fullName>
    </alternativeName>
</protein>
<proteinExistence type="evidence at protein level"/>
<name>TMP_BPPAJ</name>
<sequence length="917" mass="99265">MATDSLGTLTVDLIANTGGFERGMDAAERRIASTTRAFQRQEQAAERLVGRIDPVAGAINRLVQEQTELERHFRSGIIPAGEFERLNRILNDQLDAVQRGNREMASGAMSARQYQAALRGVPAQFTDIAVSLASGQQPLTVLLQQGGQLKDMFGGVVPAARALGGYIAGLVNPITGLAASVGVLGISFIDAEREAAAFNKAIFAGNNAAGVSGSGLSQIAEQASAVAGSLSSANKAAIALASSGKVAASQLQSLTEATIAIAQFTGKEVDDVAKSLSAMGDSATDAAAKISEQYGLLTYEQYQVIKSIDEQGNSQRALDVLGEELNRNAQERLKQYRESLSDIERDWIDIKTAITNSYAAVRSEIFPNQNQQIEQIQRILRTRQEGGVLGAVSSAFGFGENSTESLQQQLDSLVKQRDAAAKQAEEQAKITKSNQDRVDASREWEKENEKYLSSRVKMEKEISAARELGRKAGLNEIEIEDRIAQIRKSYEEKPSSRSGSLDAGQRMLDSLRQQYASMQAQLEATEKLGTQAQALVKWEQQLADLKSRGSLSADQKALLANADLITAQLKRNAALEDELNTRKEIQKTLDDYKRLNESLRTDAEKQLDLTRQRFEILDKARQAGISDDDYRRTAERIVSSSTTKAPTFSGVDAVVAGPQGELDKLDKAQEDLEAWYEQQLEILNENREKRAELNASWDEQELKLKQEHEDAMAAIEQSRQQITLSANEQFFGNLSGLAKTFFGEQSGLYKAAFVAEKSFAIAKTLINVPKTASDAYSAMAGIPVIGPALGIAAAAAAVTAQLAQVAAVKNVNLSGMAHDGIDAVPETGTWLLQKGERVTTAETSAKLDKTLDDVRSNQSGGGAPTINLIEDRSRAGQVNTRRQDDQYIIDVVVADLFGDGRTSKAIGSSFGMRRSGT</sequence>
<organismHost>
    <name type="scientific">Pseudomonas aeruginosa</name>
    <dbReference type="NCBI Taxonomy" id="287"/>
</organismHost>
<evidence type="ECO:0000255" key="1">
    <source>
        <dbReference type="HAMAP-Rule" id="MF_04138"/>
    </source>
</evidence>
<evidence type="ECO:0000256" key="2">
    <source>
        <dbReference type="SAM" id="MobiDB-lite"/>
    </source>
</evidence>
<evidence type="ECO:0000269" key="3">
    <source>
    </source>
</evidence>
<evidence type="ECO:0000303" key="4">
    <source>
    </source>
</evidence>
<evidence type="ECO:0000312" key="5">
    <source>
        <dbReference type="EMBL" id="BAG75002.1"/>
    </source>
</evidence>